<keyword id="KW-0414">Isoprene biosynthesis</keyword>
<keyword id="KW-0456">Lyase</keyword>
<keyword id="KW-0479">Metal-binding</keyword>
<keyword id="KW-1185">Reference proteome</keyword>
<proteinExistence type="inferred from homology"/>
<dbReference type="EC" id="4.6.1.12" evidence="1"/>
<dbReference type="EMBL" id="CR931997">
    <property type="protein sequence ID" value="CAI36461.1"/>
    <property type="molecule type" value="Genomic_DNA"/>
</dbReference>
<dbReference type="RefSeq" id="WP_011273021.1">
    <property type="nucleotide sequence ID" value="NC_007164.1"/>
</dbReference>
<dbReference type="SMR" id="Q4JXJ6"/>
<dbReference type="STRING" id="306537.jk0309"/>
<dbReference type="KEGG" id="cjk:jk0309"/>
<dbReference type="PATRIC" id="fig|306537.10.peg.321"/>
<dbReference type="eggNOG" id="COG0245">
    <property type="taxonomic scope" value="Bacteria"/>
</dbReference>
<dbReference type="HOGENOM" id="CLU_084630_1_0_11"/>
<dbReference type="OrthoDB" id="9804336at2"/>
<dbReference type="UniPathway" id="UPA00056">
    <property type="reaction ID" value="UER00095"/>
</dbReference>
<dbReference type="Proteomes" id="UP000000545">
    <property type="component" value="Chromosome"/>
</dbReference>
<dbReference type="GO" id="GO:0008685">
    <property type="term" value="F:2-C-methyl-D-erythritol 2,4-cyclodiphosphate synthase activity"/>
    <property type="evidence" value="ECO:0007669"/>
    <property type="project" value="UniProtKB-UniRule"/>
</dbReference>
<dbReference type="GO" id="GO:0046872">
    <property type="term" value="F:metal ion binding"/>
    <property type="evidence" value="ECO:0007669"/>
    <property type="project" value="UniProtKB-KW"/>
</dbReference>
<dbReference type="GO" id="GO:0019288">
    <property type="term" value="P:isopentenyl diphosphate biosynthetic process, methylerythritol 4-phosphate pathway"/>
    <property type="evidence" value="ECO:0007669"/>
    <property type="project" value="UniProtKB-UniRule"/>
</dbReference>
<dbReference type="GO" id="GO:0016114">
    <property type="term" value="P:terpenoid biosynthetic process"/>
    <property type="evidence" value="ECO:0007669"/>
    <property type="project" value="InterPro"/>
</dbReference>
<dbReference type="CDD" id="cd00554">
    <property type="entry name" value="MECDP_synthase"/>
    <property type="match status" value="1"/>
</dbReference>
<dbReference type="FunFam" id="3.30.1330.50:FF:000003">
    <property type="entry name" value="2-C-methyl-D-erythritol 2,4-cyclodiphosphate synthase"/>
    <property type="match status" value="1"/>
</dbReference>
<dbReference type="Gene3D" id="3.30.1330.50">
    <property type="entry name" value="2-C-methyl-D-erythritol 2,4-cyclodiphosphate synthase"/>
    <property type="match status" value="1"/>
</dbReference>
<dbReference type="HAMAP" id="MF_00107">
    <property type="entry name" value="IspF"/>
    <property type="match status" value="1"/>
</dbReference>
<dbReference type="InterPro" id="IPR003526">
    <property type="entry name" value="MECDP_synthase"/>
</dbReference>
<dbReference type="InterPro" id="IPR020555">
    <property type="entry name" value="MECDP_synthase_CS"/>
</dbReference>
<dbReference type="InterPro" id="IPR036571">
    <property type="entry name" value="MECDP_synthase_sf"/>
</dbReference>
<dbReference type="NCBIfam" id="TIGR00151">
    <property type="entry name" value="ispF"/>
    <property type="match status" value="1"/>
</dbReference>
<dbReference type="PANTHER" id="PTHR43181">
    <property type="entry name" value="2-C-METHYL-D-ERYTHRITOL 2,4-CYCLODIPHOSPHATE SYNTHASE, CHLOROPLASTIC"/>
    <property type="match status" value="1"/>
</dbReference>
<dbReference type="PANTHER" id="PTHR43181:SF1">
    <property type="entry name" value="2-C-METHYL-D-ERYTHRITOL 2,4-CYCLODIPHOSPHATE SYNTHASE, CHLOROPLASTIC"/>
    <property type="match status" value="1"/>
</dbReference>
<dbReference type="Pfam" id="PF02542">
    <property type="entry name" value="YgbB"/>
    <property type="match status" value="1"/>
</dbReference>
<dbReference type="SUPFAM" id="SSF69765">
    <property type="entry name" value="IpsF-like"/>
    <property type="match status" value="1"/>
</dbReference>
<dbReference type="PROSITE" id="PS01350">
    <property type="entry name" value="ISPF"/>
    <property type="match status" value="1"/>
</dbReference>
<gene>
    <name evidence="1" type="primary">ispF</name>
    <name type="ordered locus">jk0309</name>
</gene>
<sequence>MNTPHIIPRVGIATDAHQVQPGKDCWMACLLWEDQDGCEGHSDGDVVAHAVVDALLSAAGLGDLGSFVGVGRQEYDNVSGERLLRECRELLESKGFVIGNAAVQMVGNRPKMGTRREEAEKVMGELIGAPVSVSATTTDHMGFTGRGEGVAAVATAVVWQAQN</sequence>
<organism>
    <name type="scientific">Corynebacterium jeikeium (strain K411)</name>
    <dbReference type="NCBI Taxonomy" id="306537"/>
    <lineage>
        <taxon>Bacteria</taxon>
        <taxon>Bacillati</taxon>
        <taxon>Actinomycetota</taxon>
        <taxon>Actinomycetes</taxon>
        <taxon>Mycobacteriales</taxon>
        <taxon>Corynebacteriaceae</taxon>
        <taxon>Corynebacterium</taxon>
    </lineage>
</organism>
<evidence type="ECO:0000255" key="1">
    <source>
        <dbReference type="HAMAP-Rule" id="MF_00107"/>
    </source>
</evidence>
<name>ISPF_CORJK</name>
<accession>Q4JXJ6</accession>
<protein>
    <recommendedName>
        <fullName evidence="1">2-C-methyl-D-erythritol 2,4-cyclodiphosphate synthase</fullName>
        <shortName evidence="1">MECDP-synthase</shortName>
        <shortName evidence="1">MECPP-synthase</shortName>
        <shortName evidence="1">MECPS</shortName>
        <ecNumber evidence="1">4.6.1.12</ecNumber>
    </recommendedName>
</protein>
<feature type="chain" id="PRO_0000237718" description="2-C-methyl-D-erythritol 2,4-cyclodiphosphate synthase">
    <location>
        <begin position="1"/>
        <end position="163"/>
    </location>
</feature>
<feature type="binding site" evidence="1">
    <location>
        <begin position="15"/>
        <end position="17"/>
    </location>
    <ligand>
        <name>4-CDP-2-C-methyl-D-erythritol 2-phosphate</name>
        <dbReference type="ChEBI" id="CHEBI:57919"/>
    </ligand>
</feature>
<feature type="binding site" evidence="1">
    <location>
        <position position="15"/>
    </location>
    <ligand>
        <name>a divalent metal cation</name>
        <dbReference type="ChEBI" id="CHEBI:60240"/>
    </ligand>
</feature>
<feature type="binding site" evidence="1">
    <location>
        <position position="17"/>
    </location>
    <ligand>
        <name>a divalent metal cation</name>
        <dbReference type="ChEBI" id="CHEBI:60240"/>
    </ligand>
</feature>
<feature type="binding site" evidence="1">
    <location>
        <begin position="41"/>
        <end position="42"/>
    </location>
    <ligand>
        <name>4-CDP-2-C-methyl-D-erythritol 2-phosphate</name>
        <dbReference type="ChEBI" id="CHEBI:57919"/>
    </ligand>
</feature>
<feature type="binding site" evidence="1">
    <location>
        <position position="49"/>
    </location>
    <ligand>
        <name>a divalent metal cation</name>
        <dbReference type="ChEBI" id="CHEBI:60240"/>
    </ligand>
</feature>
<feature type="binding site" evidence="1">
    <location>
        <begin position="63"/>
        <end position="65"/>
    </location>
    <ligand>
        <name>4-CDP-2-C-methyl-D-erythritol 2-phosphate</name>
        <dbReference type="ChEBI" id="CHEBI:57919"/>
    </ligand>
</feature>
<feature type="binding site" evidence="1">
    <location>
        <begin position="136"/>
        <end position="139"/>
    </location>
    <ligand>
        <name>4-CDP-2-C-methyl-D-erythritol 2-phosphate</name>
        <dbReference type="ChEBI" id="CHEBI:57919"/>
    </ligand>
</feature>
<feature type="binding site" evidence="1">
    <location>
        <position position="143"/>
    </location>
    <ligand>
        <name>4-CDP-2-C-methyl-D-erythritol 2-phosphate</name>
        <dbReference type="ChEBI" id="CHEBI:57919"/>
    </ligand>
</feature>
<feature type="binding site" evidence="1">
    <location>
        <position position="146"/>
    </location>
    <ligand>
        <name>4-CDP-2-C-methyl-D-erythritol 2-phosphate</name>
        <dbReference type="ChEBI" id="CHEBI:57919"/>
    </ligand>
</feature>
<feature type="site" description="Transition state stabilizer" evidence="1">
    <location>
        <position position="41"/>
    </location>
</feature>
<feature type="site" description="Transition state stabilizer" evidence="1">
    <location>
        <position position="137"/>
    </location>
</feature>
<reference key="1">
    <citation type="journal article" date="2005" name="J. Bacteriol.">
        <title>Complete genome sequence and analysis of the multiresistant nosocomial pathogen Corynebacterium jeikeium K411, a lipid-requiring bacterium of the human skin flora.</title>
        <authorList>
            <person name="Tauch A."/>
            <person name="Kaiser O."/>
            <person name="Hain T."/>
            <person name="Goesmann A."/>
            <person name="Weisshaar B."/>
            <person name="Albersmeier A."/>
            <person name="Bekel T."/>
            <person name="Bischoff N."/>
            <person name="Brune I."/>
            <person name="Chakraborty T."/>
            <person name="Kalinowski J."/>
            <person name="Meyer F."/>
            <person name="Rupp O."/>
            <person name="Schneiker S."/>
            <person name="Viehoever P."/>
            <person name="Puehler A."/>
        </authorList>
    </citation>
    <scope>NUCLEOTIDE SEQUENCE [LARGE SCALE GENOMIC DNA]</scope>
    <source>
        <strain>K411</strain>
    </source>
</reference>
<comment type="function">
    <text evidence="1">Involved in the biosynthesis of isopentenyl diphosphate (IPP) and dimethylallyl diphosphate (DMAPP), two major building blocks of isoprenoid compounds. Catalyzes the conversion of 4-diphosphocytidyl-2-C-methyl-D-erythritol 2-phosphate (CDP-ME2P) to 2-C-methyl-D-erythritol 2,4-cyclodiphosphate (ME-CPP) with a corresponding release of cytidine 5-monophosphate (CMP).</text>
</comment>
<comment type="catalytic activity">
    <reaction evidence="1">
        <text>4-CDP-2-C-methyl-D-erythritol 2-phosphate = 2-C-methyl-D-erythritol 2,4-cyclic diphosphate + CMP</text>
        <dbReference type="Rhea" id="RHEA:23864"/>
        <dbReference type="ChEBI" id="CHEBI:57919"/>
        <dbReference type="ChEBI" id="CHEBI:58483"/>
        <dbReference type="ChEBI" id="CHEBI:60377"/>
        <dbReference type="EC" id="4.6.1.12"/>
    </reaction>
</comment>
<comment type="cofactor">
    <cofactor evidence="1">
        <name>a divalent metal cation</name>
        <dbReference type="ChEBI" id="CHEBI:60240"/>
    </cofactor>
    <text evidence="1">Binds 1 divalent metal cation per subunit.</text>
</comment>
<comment type="pathway">
    <text evidence="1">Isoprenoid biosynthesis; isopentenyl diphosphate biosynthesis via DXP pathway; isopentenyl diphosphate from 1-deoxy-D-xylulose 5-phosphate: step 4/6.</text>
</comment>
<comment type="subunit">
    <text evidence="1">Homotrimer.</text>
</comment>
<comment type="similarity">
    <text evidence="1">Belongs to the IspF family.</text>
</comment>